<sequence length="409" mass="46812">MEEYLNPINIFSEIGRLKKVLLHRPGEELENLTPFIMKNFLFDDIPYLEVARQEHEVFASILKNNLVEIEYIEDLISEVLVSSVALENKFISQFILEAEIKTDFTINLLKDYFSSLTIDNMISKMISGVVTEELKNYTSSLDDLVNGANLFIIDPMPNVLFTRDPFASIGNGVTINKMFTKVRQRETIFAEYIFKYHPVYKENVPIWLNRWEEASLEGGDELVLNKGLLVIGISERTEAKSVEKLAISLFKNKTSFDTILAFQIPKNRSYMHLDTVFTQIDYSVFTSFTSDDMYFSIYVLTYNPSSSKIHIKKEKARIKDVLSFYLGRKIDIIKCAGGDLIHGAREQWNDGANVLAIAPGEIIAYSRNHVTNKLFEENGIKVHRIPSSELSRGRGGPRCMSMPLIREDI</sequence>
<name>ARCA_BORAF</name>
<gene>
    <name type="primary">arcA</name>
</gene>
<evidence type="ECO:0000250" key="1"/>
<evidence type="ECO:0000305" key="2"/>
<comment type="catalytic activity">
    <reaction>
        <text>L-arginine + H2O = L-citrulline + NH4(+)</text>
        <dbReference type="Rhea" id="RHEA:19597"/>
        <dbReference type="ChEBI" id="CHEBI:15377"/>
        <dbReference type="ChEBI" id="CHEBI:28938"/>
        <dbReference type="ChEBI" id="CHEBI:32682"/>
        <dbReference type="ChEBI" id="CHEBI:57743"/>
        <dbReference type="EC" id="3.5.3.6"/>
    </reaction>
</comment>
<comment type="pathway">
    <text>Amino-acid degradation; L-arginine degradation via ADI pathway; carbamoyl phosphate from L-arginine: step 1/2.</text>
</comment>
<comment type="subcellular location">
    <subcellularLocation>
        <location evidence="2">Cytoplasm</location>
    </subcellularLocation>
</comment>
<comment type="similarity">
    <text evidence="2">Belongs to the arginine deiminase family.</text>
</comment>
<reference key="1">
    <citation type="journal article" date="1997" name="Mol. Microbiol.">
        <title>Telomeres of the linear chromosomes of Lyme disease spirochaetes: nucleotide sequence and possible exchange with linear plasmid telomeres.</title>
        <authorList>
            <person name="Casjens S."/>
            <person name="Murphy M."/>
            <person name="DeLange M."/>
            <person name="Sampson L."/>
            <person name="van Vugt R."/>
            <person name="Huang W.M."/>
        </authorList>
    </citation>
    <scope>NUCLEOTIDE SEQUENCE [GENOMIC DNA]</scope>
    <source>
        <strain>R-IP3</strain>
    </source>
</reference>
<accession>O51896</accession>
<feature type="chain" id="PRO_0000182202" description="Arginine deiminase">
    <location>
        <begin position="1"/>
        <end position="409"/>
    </location>
</feature>
<feature type="active site" description="Amidino-cysteine intermediate" evidence="1">
    <location>
        <position position="399"/>
    </location>
</feature>
<dbReference type="EC" id="3.5.3.6"/>
<dbReference type="EMBL" id="AF008219">
    <property type="protein sequence ID" value="AAB93998.1"/>
    <property type="molecule type" value="Genomic_DNA"/>
</dbReference>
<dbReference type="SMR" id="O51896"/>
<dbReference type="UniPathway" id="UPA00254">
    <property type="reaction ID" value="UER00364"/>
</dbReference>
<dbReference type="GO" id="GO:0005737">
    <property type="term" value="C:cytoplasm"/>
    <property type="evidence" value="ECO:0007669"/>
    <property type="project" value="UniProtKB-SubCell"/>
</dbReference>
<dbReference type="GO" id="GO:0016990">
    <property type="term" value="F:arginine deiminase activity"/>
    <property type="evidence" value="ECO:0007669"/>
    <property type="project" value="UniProtKB-UniRule"/>
</dbReference>
<dbReference type="GO" id="GO:0019547">
    <property type="term" value="P:arginine catabolic process to ornithine"/>
    <property type="evidence" value="ECO:0007669"/>
    <property type="project" value="UniProtKB-UniRule"/>
</dbReference>
<dbReference type="GO" id="GO:0019546">
    <property type="term" value="P:arginine deiminase pathway"/>
    <property type="evidence" value="ECO:0007669"/>
    <property type="project" value="TreeGrafter"/>
</dbReference>
<dbReference type="Gene3D" id="1.10.3930.10">
    <property type="entry name" value="Arginine deiminase"/>
    <property type="match status" value="1"/>
</dbReference>
<dbReference type="Gene3D" id="3.75.10.10">
    <property type="entry name" value="L-arginine/glycine Amidinotransferase, Chain A"/>
    <property type="match status" value="1"/>
</dbReference>
<dbReference type="HAMAP" id="MF_00242">
    <property type="entry name" value="Arg_deiminase"/>
    <property type="match status" value="1"/>
</dbReference>
<dbReference type="InterPro" id="IPR003876">
    <property type="entry name" value="Arg_deiminase"/>
</dbReference>
<dbReference type="NCBIfam" id="TIGR01078">
    <property type="entry name" value="arcA"/>
    <property type="match status" value="1"/>
</dbReference>
<dbReference type="NCBIfam" id="NF002381">
    <property type="entry name" value="PRK01388.1"/>
    <property type="match status" value="1"/>
</dbReference>
<dbReference type="PANTHER" id="PTHR47271">
    <property type="entry name" value="ARGININE DEIMINASE"/>
    <property type="match status" value="1"/>
</dbReference>
<dbReference type="PANTHER" id="PTHR47271:SF2">
    <property type="entry name" value="ARGININE DEIMINASE"/>
    <property type="match status" value="1"/>
</dbReference>
<dbReference type="Pfam" id="PF02274">
    <property type="entry name" value="ADI"/>
    <property type="match status" value="1"/>
</dbReference>
<dbReference type="PIRSF" id="PIRSF006356">
    <property type="entry name" value="Arg_deiminase"/>
    <property type="match status" value="1"/>
</dbReference>
<dbReference type="PRINTS" id="PR01466">
    <property type="entry name" value="ARGDEIMINASE"/>
</dbReference>
<dbReference type="SUPFAM" id="SSF55909">
    <property type="entry name" value="Pentein"/>
    <property type="match status" value="1"/>
</dbReference>
<proteinExistence type="inferred from homology"/>
<organism>
    <name type="scientific">Borreliella afzelii</name>
    <name type="common">Borrelia afzelii</name>
    <dbReference type="NCBI Taxonomy" id="29518"/>
    <lineage>
        <taxon>Bacteria</taxon>
        <taxon>Pseudomonadati</taxon>
        <taxon>Spirochaetota</taxon>
        <taxon>Spirochaetia</taxon>
        <taxon>Spirochaetales</taxon>
        <taxon>Borreliaceae</taxon>
        <taxon>Borreliella</taxon>
    </lineage>
</organism>
<keyword id="KW-0056">Arginine metabolism</keyword>
<keyword id="KW-0963">Cytoplasm</keyword>
<keyword id="KW-0378">Hydrolase</keyword>
<protein>
    <recommendedName>
        <fullName>Arginine deiminase</fullName>
        <shortName>ADI</shortName>
        <ecNumber>3.5.3.6</ecNumber>
    </recommendedName>
    <alternativeName>
        <fullName>Arginine dihydrolase</fullName>
        <shortName>AD</shortName>
    </alternativeName>
</protein>